<protein>
    <recommendedName>
        <fullName evidence="1">Probable ribosomal RNA small subunit methyltransferase A</fullName>
        <ecNumber evidence="1">2.1.1.-</ecNumber>
    </recommendedName>
    <alternativeName>
        <fullName evidence="1">16S rRNA dimethyladenosine transferase</fullName>
    </alternativeName>
    <alternativeName>
        <fullName evidence="1">16S rRNA dimethylase</fullName>
    </alternativeName>
    <alternativeName>
        <fullName evidence="1">S-adenosylmethionine-6-N',N'-adenosyl(rRNA) dimethyltransferase</fullName>
    </alternativeName>
</protein>
<dbReference type="EC" id="2.1.1.-" evidence="1"/>
<dbReference type="EMBL" id="AM180088">
    <property type="protein sequence ID" value="CAJ52985.1"/>
    <property type="molecule type" value="Genomic_DNA"/>
</dbReference>
<dbReference type="RefSeq" id="WP_011572096.1">
    <property type="nucleotide sequence ID" value="NC_008212.1"/>
</dbReference>
<dbReference type="SMR" id="Q18GB5"/>
<dbReference type="STRING" id="362976.HQ_2878A"/>
<dbReference type="GeneID" id="4194176"/>
<dbReference type="KEGG" id="hwa:HQ_2878A"/>
<dbReference type="eggNOG" id="arCOG04131">
    <property type="taxonomic scope" value="Archaea"/>
</dbReference>
<dbReference type="HOGENOM" id="CLU_041220_0_2_2"/>
<dbReference type="Proteomes" id="UP000001975">
    <property type="component" value="Chromosome"/>
</dbReference>
<dbReference type="GO" id="GO:0005737">
    <property type="term" value="C:cytoplasm"/>
    <property type="evidence" value="ECO:0007669"/>
    <property type="project" value="UniProtKB-SubCell"/>
</dbReference>
<dbReference type="GO" id="GO:0003723">
    <property type="term" value="F:RNA binding"/>
    <property type="evidence" value="ECO:0007669"/>
    <property type="project" value="UniProtKB-KW"/>
</dbReference>
<dbReference type="GO" id="GO:0000179">
    <property type="term" value="F:rRNA (adenine-N6,N6-)-dimethyltransferase activity"/>
    <property type="evidence" value="ECO:0007669"/>
    <property type="project" value="InterPro"/>
</dbReference>
<dbReference type="CDD" id="cd02440">
    <property type="entry name" value="AdoMet_MTases"/>
    <property type="match status" value="1"/>
</dbReference>
<dbReference type="Gene3D" id="1.10.8.100">
    <property type="entry name" value="Ribosomal RNA adenine dimethylase-like, domain 2"/>
    <property type="match status" value="1"/>
</dbReference>
<dbReference type="Gene3D" id="3.40.50.150">
    <property type="entry name" value="Vaccinia Virus protein VP39"/>
    <property type="match status" value="1"/>
</dbReference>
<dbReference type="HAMAP" id="MF_00607">
    <property type="entry name" value="16SrRNA_methyltr_A"/>
    <property type="match status" value="1"/>
</dbReference>
<dbReference type="InterPro" id="IPR001737">
    <property type="entry name" value="KsgA/Erm"/>
</dbReference>
<dbReference type="InterPro" id="IPR023165">
    <property type="entry name" value="rRNA_Ade_diMease-like_C"/>
</dbReference>
<dbReference type="InterPro" id="IPR020596">
    <property type="entry name" value="rRNA_Ade_Mease_Trfase_CS"/>
</dbReference>
<dbReference type="InterPro" id="IPR020598">
    <property type="entry name" value="rRNA_Ade_methylase_Trfase_N"/>
</dbReference>
<dbReference type="InterPro" id="IPR011530">
    <property type="entry name" value="rRNA_adenine_dimethylase"/>
</dbReference>
<dbReference type="InterPro" id="IPR029063">
    <property type="entry name" value="SAM-dependent_MTases_sf"/>
</dbReference>
<dbReference type="NCBIfam" id="TIGR00755">
    <property type="entry name" value="ksgA"/>
    <property type="match status" value="1"/>
</dbReference>
<dbReference type="NCBIfam" id="NF011486">
    <property type="entry name" value="PRK14896.1-1"/>
    <property type="match status" value="1"/>
</dbReference>
<dbReference type="PANTHER" id="PTHR11727">
    <property type="entry name" value="DIMETHYLADENOSINE TRANSFERASE"/>
    <property type="match status" value="1"/>
</dbReference>
<dbReference type="PANTHER" id="PTHR11727:SF7">
    <property type="entry name" value="DIMETHYLADENOSINE TRANSFERASE-RELATED"/>
    <property type="match status" value="1"/>
</dbReference>
<dbReference type="Pfam" id="PF00398">
    <property type="entry name" value="RrnaAD"/>
    <property type="match status" value="1"/>
</dbReference>
<dbReference type="SMART" id="SM00650">
    <property type="entry name" value="rADc"/>
    <property type="match status" value="1"/>
</dbReference>
<dbReference type="SUPFAM" id="SSF53335">
    <property type="entry name" value="S-adenosyl-L-methionine-dependent methyltransferases"/>
    <property type="match status" value="1"/>
</dbReference>
<dbReference type="PROSITE" id="PS01131">
    <property type="entry name" value="RRNA_A_DIMETH"/>
    <property type="match status" value="1"/>
</dbReference>
<dbReference type="PROSITE" id="PS51689">
    <property type="entry name" value="SAM_RNA_A_N6_MT"/>
    <property type="match status" value="1"/>
</dbReference>
<accession>Q18GB5</accession>
<proteinExistence type="inferred from homology"/>
<name>RSMA_HALWD</name>
<reference key="1">
    <citation type="journal article" date="2006" name="BMC Genomics">
        <title>The genome of the square archaeon Haloquadratum walsbyi: life at the limits of water activity.</title>
        <authorList>
            <person name="Bolhuis H."/>
            <person name="Palm P."/>
            <person name="Wende A."/>
            <person name="Falb M."/>
            <person name="Rampp M."/>
            <person name="Rodriguez-Valera F."/>
            <person name="Pfeiffer F."/>
            <person name="Oesterhelt D."/>
        </authorList>
    </citation>
    <scope>NUCLEOTIDE SEQUENCE [LARGE SCALE GENOMIC DNA]</scope>
    <source>
        <strain>DSM 16790 / HBSQ001</strain>
    </source>
</reference>
<comment type="function">
    <text evidence="1">Specifically dimethylates two adjacent adenosines in the loop of a conserved hairpin near the 3'-end of 16S rRNA in the 30S particle. May play a critical role in biogenesis of 30S subunits.</text>
</comment>
<comment type="subcellular location">
    <subcellularLocation>
        <location evidence="1">Cytoplasm</location>
    </subcellularLocation>
</comment>
<comment type="similarity">
    <text evidence="1">Belongs to the class I-like SAM-binding methyltransferase superfamily. rRNA adenine N(6)-methyltransferase family. RsmA subfamily.</text>
</comment>
<feature type="chain" id="PRO_0000257378" description="Probable ribosomal RNA small subunit methyltransferase A">
    <location>
        <begin position="1"/>
        <end position="296"/>
    </location>
</feature>
<feature type="region of interest" description="Disordered" evidence="2">
    <location>
        <begin position="1"/>
        <end position="25"/>
    </location>
</feature>
<feature type="compositionally biased region" description="Polar residues" evidence="2">
    <location>
        <begin position="1"/>
        <end position="16"/>
    </location>
</feature>
<feature type="binding site" evidence="1">
    <location>
        <position position="44"/>
    </location>
    <ligand>
        <name>S-adenosyl-L-methionine</name>
        <dbReference type="ChEBI" id="CHEBI:59789"/>
    </ligand>
</feature>
<feature type="binding site" evidence="1">
    <location>
        <position position="46"/>
    </location>
    <ligand>
        <name>S-adenosyl-L-methionine</name>
        <dbReference type="ChEBI" id="CHEBI:59789"/>
    </ligand>
</feature>
<feature type="binding site" evidence="1">
    <location>
        <position position="72"/>
    </location>
    <ligand>
        <name>S-adenosyl-L-methionine</name>
        <dbReference type="ChEBI" id="CHEBI:59789"/>
    </ligand>
</feature>
<feature type="binding site" evidence="1">
    <location>
        <position position="93"/>
    </location>
    <ligand>
        <name>S-adenosyl-L-methionine</name>
        <dbReference type="ChEBI" id="CHEBI:59789"/>
    </ligand>
</feature>
<feature type="binding site" evidence="1">
    <location>
        <position position="121"/>
    </location>
    <ligand>
        <name>S-adenosyl-L-methionine</name>
        <dbReference type="ChEBI" id="CHEBI:59789"/>
    </ligand>
</feature>
<feature type="binding site" evidence="1">
    <location>
        <position position="136"/>
    </location>
    <ligand>
        <name>S-adenosyl-L-methionine</name>
        <dbReference type="ChEBI" id="CHEBI:59789"/>
    </ligand>
</feature>
<keyword id="KW-0963">Cytoplasm</keyword>
<keyword id="KW-0489">Methyltransferase</keyword>
<keyword id="KW-1185">Reference proteome</keyword>
<keyword id="KW-0694">RNA-binding</keyword>
<keyword id="KW-0698">rRNA processing</keyword>
<keyword id="KW-0949">S-adenosyl-L-methionine</keyword>
<keyword id="KW-0808">Transferase</keyword>
<organism>
    <name type="scientific">Haloquadratum walsbyi (strain DSM 16790 / HBSQ001)</name>
    <dbReference type="NCBI Taxonomy" id="362976"/>
    <lineage>
        <taxon>Archaea</taxon>
        <taxon>Methanobacteriati</taxon>
        <taxon>Methanobacteriota</taxon>
        <taxon>Stenosarchaea group</taxon>
        <taxon>Halobacteria</taxon>
        <taxon>Halobacteriales</taxon>
        <taxon>Haloferacaceae</taxon>
        <taxon>Haloquadratum</taxon>
    </lineage>
</organism>
<sequence length="296" mass="32134">MTDATSGSDPDSTTPVDLTGEDFRDPDALRRRAGVSGDPNFDQHFLIDDRVLDRIPTYLLDSTDTTHILEIGAGTGALTDRLLAVGDTVTVIERDATLAAFLREEFAVMIDDGRLNIIEGDALEVTLPAFTTCISNLPYGISSEILFELLPADCPLIVMVQREFGERMAADPGTDAYGRLSVSAQHYATVEVVETVPPTAFAPEPAVDSALIRAEPRDPDYTVTDETFFLRFVKAVFTQRRKTVRNAIRNTAHISMLDTPDAVVNAADEALLSQRAGDLTPSEFAELATIAAEKGK</sequence>
<evidence type="ECO:0000255" key="1">
    <source>
        <dbReference type="HAMAP-Rule" id="MF_00607"/>
    </source>
</evidence>
<evidence type="ECO:0000256" key="2">
    <source>
        <dbReference type="SAM" id="MobiDB-lite"/>
    </source>
</evidence>
<gene>
    <name evidence="1" type="primary">rsmA</name>
    <name evidence="1" type="synonym">ksgA</name>
    <name type="ordered locus">HQ_2878A</name>
</gene>